<evidence type="ECO:0000255" key="1">
    <source>
        <dbReference type="HAMAP-Rule" id="MF_00368"/>
    </source>
</evidence>
<evidence type="ECO:0000305" key="2"/>
<name>RL7_MYCVP</name>
<keyword id="KW-0687">Ribonucleoprotein</keyword>
<keyword id="KW-0689">Ribosomal protein</keyword>
<dbReference type="EMBL" id="CP000511">
    <property type="protein sequence ID" value="ABM12088.1"/>
    <property type="molecule type" value="Genomic_DNA"/>
</dbReference>
<dbReference type="RefSeq" id="WP_011778521.1">
    <property type="nucleotide sequence ID" value="NZ_JACKSD010000070.1"/>
</dbReference>
<dbReference type="SMR" id="A1T4I8"/>
<dbReference type="STRING" id="350058.Mvan_1253"/>
<dbReference type="KEGG" id="mva:Mvan_1253"/>
<dbReference type="eggNOG" id="COG0222">
    <property type="taxonomic scope" value="Bacteria"/>
</dbReference>
<dbReference type="HOGENOM" id="CLU_086499_3_0_11"/>
<dbReference type="Proteomes" id="UP000009159">
    <property type="component" value="Chromosome"/>
</dbReference>
<dbReference type="GO" id="GO:0022625">
    <property type="term" value="C:cytosolic large ribosomal subunit"/>
    <property type="evidence" value="ECO:0007669"/>
    <property type="project" value="TreeGrafter"/>
</dbReference>
<dbReference type="GO" id="GO:0003729">
    <property type="term" value="F:mRNA binding"/>
    <property type="evidence" value="ECO:0007669"/>
    <property type="project" value="TreeGrafter"/>
</dbReference>
<dbReference type="GO" id="GO:0003735">
    <property type="term" value="F:structural constituent of ribosome"/>
    <property type="evidence" value="ECO:0007669"/>
    <property type="project" value="InterPro"/>
</dbReference>
<dbReference type="GO" id="GO:0006412">
    <property type="term" value="P:translation"/>
    <property type="evidence" value="ECO:0007669"/>
    <property type="project" value="UniProtKB-UniRule"/>
</dbReference>
<dbReference type="CDD" id="cd00387">
    <property type="entry name" value="Ribosomal_L7_L12"/>
    <property type="match status" value="1"/>
</dbReference>
<dbReference type="FunFam" id="1.20.5.710:FF:000005">
    <property type="entry name" value="50S ribosomal protein L7/L12"/>
    <property type="match status" value="1"/>
</dbReference>
<dbReference type="FunFam" id="3.30.1390.10:FF:000001">
    <property type="entry name" value="50S ribosomal protein L7/L12"/>
    <property type="match status" value="1"/>
</dbReference>
<dbReference type="Gene3D" id="3.30.1390.10">
    <property type="match status" value="1"/>
</dbReference>
<dbReference type="Gene3D" id="1.20.5.710">
    <property type="entry name" value="Single helix bin"/>
    <property type="match status" value="1"/>
</dbReference>
<dbReference type="HAMAP" id="MF_00368">
    <property type="entry name" value="Ribosomal_bL12"/>
    <property type="match status" value="1"/>
</dbReference>
<dbReference type="InterPro" id="IPR000206">
    <property type="entry name" value="Ribosomal_bL12"/>
</dbReference>
<dbReference type="InterPro" id="IPR013823">
    <property type="entry name" value="Ribosomal_bL12_C"/>
</dbReference>
<dbReference type="InterPro" id="IPR014719">
    <property type="entry name" value="Ribosomal_bL12_C/ClpS-like"/>
</dbReference>
<dbReference type="InterPro" id="IPR008932">
    <property type="entry name" value="Ribosomal_bL12_oligo"/>
</dbReference>
<dbReference type="InterPro" id="IPR036235">
    <property type="entry name" value="Ribosomal_bL12_oligo_N_sf"/>
</dbReference>
<dbReference type="NCBIfam" id="TIGR00855">
    <property type="entry name" value="L12"/>
    <property type="match status" value="1"/>
</dbReference>
<dbReference type="PANTHER" id="PTHR45987">
    <property type="entry name" value="39S RIBOSOMAL PROTEIN L12"/>
    <property type="match status" value="1"/>
</dbReference>
<dbReference type="PANTHER" id="PTHR45987:SF4">
    <property type="entry name" value="LARGE RIBOSOMAL SUBUNIT PROTEIN BL12M"/>
    <property type="match status" value="1"/>
</dbReference>
<dbReference type="Pfam" id="PF00542">
    <property type="entry name" value="Ribosomal_L12"/>
    <property type="match status" value="1"/>
</dbReference>
<dbReference type="Pfam" id="PF16320">
    <property type="entry name" value="Ribosomal_L12_N"/>
    <property type="match status" value="1"/>
</dbReference>
<dbReference type="SUPFAM" id="SSF54736">
    <property type="entry name" value="ClpS-like"/>
    <property type="match status" value="1"/>
</dbReference>
<dbReference type="SUPFAM" id="SSF48300">
    <property type="entry name" value="Ribosomal protein L7/12, oligomerisation (N-terminal) domain"/>
    <property type="match status" value="1"/>
</dbReference>
<gene>
    <name evidence="1" type="primary">rplL</name>
    <name type="ordered locus">Mvan_1253</name>
</gene>
<reference key="1">
    <citation type="submission" date="2006-12" db="EMBL/GenBank/DDBJ databases">
        <title>Complete sequence of Mycobacterium vanbaalenii PYR-1.</title>
        <authorList>
            <consortium name="US DOE Joint Genome Institute"/>
            <person name="Copeland A."/>
            <person name="Lucas S."/>
            <person name="Lapidus A."/>
            <person name="Barry K."/>
            <person name="Detter J.C."/>
            <person name="Glavina del Rio T."/>
            <person name="Hammon N."/>
            <person name="Israni S."/>
            <person name="Dalin E."/>
            <person name="Tice H."/>
            <person name="Pitluck S."/>
            <person name="Singan V."/>
            <person name="Schmutz J."/>
            <person name="Larimer F."/>
            <person name="Land M."/>
            <person name="Hauser L."/>
            <person name="Kyrpides N."/>
            <person name="Anderson I.J."/>
            <person name="Miller C."/>
            <person name="Richardson P."/>
        </authorList>
    </citation>
    <scope>NUCLEOTIDE SEQUENCE [LARGE SCALE GENOMIC DNA]</scope>
    <source>
        <strain>DSM 7251 / JCM 13017 / BCRC 16820 / KCTC 9966 / NRRL B-24157 / PYR-1</strain>
    </source>
</reference>
<feature type="chain" id="PRO_1000007042" description="Large ribosomal subunit protein bL12">
    <location>
        <begin position="1"/>
        <end position="130"/>
    </location>
</feature>
<comment type="function">
    <text evidence="1">Forms part of the ribosomal stalk which helps the ribosome interact with GTP-bound translation factors. Is thus essential for accurate translation.</text>
</comment>
<comment type="subunit">
    <text evidence="1">Homodimer. Part of the ribosomal stalk of the 50S ribosomal subunit. Forms a multimeric L10(L12)X complex, where L10 forms an elongated spine to which 2 to 4 L12 dimers bind in a sequential fashion. Binds GTP-bound translation factors.</text>
</comment>
<comment type="similarity">
    <text evidence="1">Belongs to the bacterial ribosomal protein bL12 family.</text>
</comment>
<accession>A1T4I8</accession>
<protein>
    <recommendedName>
        <fullName evidence="1">Large ribosomal subunit protein bL12</fullName>
    </recommendedName>
    <alternativeName>
        <fullName evidence="2">50S ribosomal protein L7/L12</fullName>
    </alternativeName>
</protein>
<sequence>MAKLSTDDLLDAFKEMTLLELSEFVKQFEETFDVTAAAPVAVAAAGPAAGGAAAEAAEEQSEFDVVLESAGEKKIGVIKVVREIVSGLGLKEAKDLVDSAPKPLLEKVNKEAAEDAKGKLEAAGATVTVK</sequence>
<proteinExistence type="inferred from homology"/>
<organism>
    <name type="scientific">Mycolicibacterium vanbaalenii (strain DSM 7251 / JCM 13017 / BCRC 16820 / KCTC 9966 / NRRL B-24157 / PYR-1)</name>
    <name type="common">Mycobacterium vanbaalenii</name>
    <dbReference type="NCBI Taxonomy" id="350058"/>
    <lineage>
        <taxon>Bacteria</taxon>
        <taxon>Bacillati</taxon>
        <taxon>Actinomycetota</taxon>
        <taxon>Actinomycetes</taxon>
        <taxon>Mycobacteriales</taxon>
        <taxon>Mycobacteriaceae</taxon>
        <taxon>Mycolicibacterium</taxon>
    </lineage>
</organism>